<protein>
    <recommendedName>
        <fullName>SUMO-activating enzyme subunit 2</fullName>
        <ecNumber>2.3.2.-</ecNumber>
    </recommendedName>
    <alternativeName>
        <fullName>Anthracycline-associated resistance ARX</fullName>
    </alternativeName>
    <alternativeName>
        <fullName>Ubiquitin-like 1-activating enzyme E1B</fullName>
    </alternativeName>
    <alternativeName>
        <fullName>Ubiquitin-like modifier-activating enzyme 2</fullName>
    </alternativeName>
</protein>
<keyword id="KW-0007">Acetylation</keyword>
<keyword id="KW-0067">ATP-binding</keyword>
<keyword id="KW-0963">Cytoplasm</keyword>
<keyword id="KW-1017">Isopeptide bond</keyword>
<keyword id="KW-0479">Metal-binding</keyword>
<keyword id="KW-0547">Nucleotide-binding</keyword>
<keyword id="KW-0539">Nucleus</keyword>
<keyword id="KW-0597">Phosphoprotein</keyword>
<keyword id="KW-1185">Reference proteome</keyword>
<keyword id="KW-0808">Transferase</keyword>
<keyword id="KW-0832">Ubl conjugation</keyword>
<keyword id="KW-0833">Ubl conjugation pathway</keyword>
<keyword id="KW-0862">Zinc</keyword>
<gene>
    <name type="primary">Uba2</name>
    <name type="synonym">Sae2</name>
    <name type="synonym">Uble1b</name>
</gene>
<sequence length="638" mass="70569">MALSRGLPRELAEAVSGGRVLVVGAGGIGCELLKNLVLTGFSHIDLIDLDTIDVSNLNRQFLFQKKHVGRSKAQVAKESVLQFHPQANIEAHHDSIMNPDYNVEFFRQFILVMNALDNRAARNHVNRMCLAADVPLIESGTAGYLGQVTTIKKGVTECYECHPKPTQRTFPGCTIRNTPSEPIHCIVWAKYLFNQLFGEEDADQEVSPDRADPEAAWEPTEAEARARASNEDGDIKRISTKEWAKSTGYDPVKLFTKLFKDDIRYLLTMDKLWRKRKPPVPLDWAEVQSQGEANADQQNEPQLGLKDQQVLDVKSYASLFSKSIETLRVHLAEKGDGAELIWDKDDPPAMDFVTSAANLRMHIFSMNMKSRFDIKSMAGNIIPAIATTNAVIAGLIVLEGLKILSGKIDQCRTIFLNKQPNPRKKLLVPCALDPPNTNCYVCASKPEVTVRLNVHKVTVLTLQDKIVKEKFAMVAPDVQIEDGKGTILISSEEGETEANNPKKLSDFGIRNGSRLQADDFLQDYTLLINILHSEDLGKDVEFEVVGDSPEKVGPKQAEDAAKSIANGSDDGAQPSTSTAQEQDDVLIVDSDEEGPSNSTDCSGDDKARKRKLEENEAASTKKCRLEQMEDPDDVIALD</sequence>
<feature type="chain" id="PRO_0000194969" description="SUMO-activating enzyme subunit 2">
    <location>
        <begin position="1"/>
        <end position="638"/>
    </location>
</feature>
<feature type="region of interest" description="Disordered" evidence="4">
    <location>
        <begin position="202"/>
        <end position="233"/>
    </location>
</feature>
<feature type="region of interest" description="Disordered" evidence="4">
    <location>
        <begin position="548"/>
        <end position="638"/>
    </location>
</feature>
<feature type="compositionally biased region" description="Basic and acidic residues" evidence="4">
    <location>
        <begin position="222"/>
        <end position="233"/>
    </location>
</feature>
<feature type="compositionally biased region" description="Basic and acidic residues" evidence="4">
    <location>
        <begin position="548"/>
        <end position="561"/>
    </location>
</feature>
<feature type="compositionally biased region" description="Acidic residues" evidence="4">
    <location>
        <begin position="581"/>
        <end position="594"/>
    </location>
</feature>
<feature type="compositionally biased region" description="Basic and acidic residues" evidence="4">
    <location>
        <begin position="603"/>
        <end position="614"/>
    </location>
</feature>
<feature type="compositionally biased region" description="Acidic residues" evidence="4">
    <location>
        <begin position="628"/>
        <end position="638"/>
    </location>
</feature>
<feature type="active site" description="Glycyl thioester intermediate" evidence="3">
    <location>
        <position position="173"/>
    </location>
</feature>
<feature type="binding site" evidence="1">
    <location>
        <begin position="24"/>
        <end position="29"/>
    </location>
    <ligand>
        <name>ATP</name>
        <dbReference type="ChEBI" id="CHEBI:30616"/>
    </ligand>
</feature>
<feature type="binding site" evidence="1">
    <location>
        <position position="48"/>
    </location>
    <ligand>
        <name>ATP</name>
        <dbReference type="ChEBI" id="CHEBI:30616"/>
    </ligand>
</feature>
<feature type="binding site" evidence="1">
    <location>
        <begin position="56"/>
        <end position="59"/>
    </location>
    <ligand>
        <name>ATP</name>
        <dbReference type="ChEBI" id="CHEBI:30616"/>
    </ligand>
</feature>
<feature type="binding site" evidence="1">
    <location>
        <position position="72"/>
    </location>
    <ligand>
        <name>ATP</name>
        <dbReference type="ChEBI" id="CHEBI:30616"/>
    </ligand>
</feature>
<feature type="binding site" evidence="1">
    <location>
        <begin position="95"/>
        <end position="96"/>
    </location>
    <ligand>
        <name>ATP</name>
        <dbReference type="ChEBI" id="CHEBI:30616"/>
    </ligand>
</feature>
<feature type="binding site" evidence="1">
    <location>
        <begin position="117"/>
        <end position="122"/>
    </location>
    <ligand>
        <name>ATP</name>
        <dbReference type="ChEBI" id="CHEBI:30616"/>
    </ligand>
</feature>
<feature type="binding site" evidence="1">
    <location>
        <position position="158"/>
    </location>
    <ligand>
        <name>Zn(2+)</name>
        <dbReference type="ChEBI" id="CHEBI:29105"/>
    </ligand>
</feature>
<feature type="binding site" evidence="1">
    <location>
        <position position="161"/>
    </location>
    <ligand>
        <name>Zn(2+)</name>
        <dbReference type="ChEBI" id="CHEBI:29105"/>
    </ligand>
</feature>
<feature type="binding site" evidence="1">
    <location>
        <position position="439"/>
    </location>
    <ligand>
        <name>Zn(2+)</name>
        <dbReference type="ChEBI" id="CHEBI:29105"/>
    </ligand>
</feature>
<feature type="binding site" evidence="1">
    <location>
        <position position="442"/>
    </location>
    <ligand>
        <name>Zn(2+)</name>
        <dbReference type="ChEBI" id="CHEBI:29105"/>
    </ligand>
</feature>
<feature type="modified residue" description="Phosphoserine" evidence="7">
    <location>
        <position position="207"/>
    </location>
</feature>
<feature type="modified residue" description="N6-acetyllysine; alternate" evidence="8">
    <location>
        <position position="271"/>
    </location>
</feature>
<feature type="modified residue" description="Phosphoserine" evidence="2">
    <location>
        <position position="505"/>
    </location>
</feature>
<feature type="modified residue" description="Phosphoserine" evidence="7">
    <location>
        <position position="548"/>
    </location>
</feature>
<feature type="modified residue" description="Phosphoserine" evidence="7">
    <location>
        <position position="590"/>
    </location>
</feature>
<feature type="modified residue" description="N6-acetyllysine; alternate" evidence="8">
    <location>
        <position position="611"/>
    </location>
</feature>
<feature type="cross-link" description="Glycyl lysine isopeptide (Lys-Gly) (interchain with G-Cter in SUMO1)" evidence="2">
    <location>
        <position position="164"/>
    </location>
</feature>
<feature type="cross-link" description="Glycyl lysine isopeptide (Lys-Gly) (interchain with G-Cter in SUMO)" evidence="1">
    <location>
        <position position="190"/>
    </location>
</feature>
<feature type="cross-link" description="Glycyl lysine isopeptide (Lys-Gly) (interchain with G-Cter in SUMO1); alternate" evidence="2">
    <location>
        <position position="236"/>
    </location>
</feature>
<feature type="cross-link" description="Glycyl lysine isopeptide (Lys-Gly) (interchain with G-Cter in SUMO2); alternate" evidence="2">
    <location>
        <position position="236"/>
    </location>
</feature>
<feature type="cross-link" description="Glycyl lysine isopeptide (Lys-Gly) (interchain with G-Cter in SUMO); alternate" evidence="1">
    <location>
        <position position="257"/>
    </location>
</feature>
<feature type="cross-link" description="Glycyl lysine isopeptide (Lys-Gly) (interchain with G-Cter in SUMO2); alternate" evidence="2">
    <location>
        <position position="257"/>
    </location>
</feature>
<feature type="cross-link" description="Glycyl lysine isopeptide (Lys-Gly) (interchain with G-Cter in SUMO); alternate" evidence="1">
    <location>
        <position position="271"/>
    </location>
</feature>
<feature type="cross-link" description="Glycyl lysine isopeptide (Lys-Gly) (interchain with G-Cter in SUMO)" evidence="1">
    <location>
        <position position="275"/>
    </location>
</feature>
<feature type="cross-link" description="Glycyl lysine isopeptide (Lys-Gly) (interchain with G-Cter in SUMO2)" evidence="2">
    <location>
        <position position="369"/>
    </location>
</feature>
<feature type="cross-link" description="Glycyl lysine isopeptide (Lys-Gly) (interchain with G-Cter in SUMO1); alternate" evidence="2">
    <location>
        <position position="418"/>
    </location>
</feature>
<feature type="cross-link" description="Glycyl lysine isopeptide (Lys-Gly) (interchain with G-Cter in SUMO2); alternate" evidence="2">
    <location>
        <position position="418"/>
    </location>
</feature>
<feature type="cross-link" description="Glycyl lysine isopeptide (Lys-Gly) (interchain with G-Cter in SUMO2)" evidence="2">
    <location>
        <position position="538"/>
    </location>
</feature>
<feature type="cross-link" description="Glycyl lysine isopeptide (Lys-Gly) (interchain with G-Cter in SUMO)" evidence="1">
    <location>
        <position position="609"/>
    </location>
</feature>
<feature type="cross-link" description="Glycyl lysine isopeptide (Lys-Gly) (interchain with G-Cter in SUMO); alternate" evidence="1">
    <location>
        <position position="611"/>
    </location>
</feature>
<feature type="cross-link" description="Glycyl lysine isopeptide (Lys-Gly) (interchain with G-Cter in SUMO)" evidence="1">
    <location>
        <position position="621"/>
    </location>
</feature>
<feature type="sequence conflict" description="In Ref. 2; BAE37349." evidence="6" ref="2">
    <original>D</original>
    <variation>V</variation>
    <location>
        <position position="209"/>
    </location>
</feature>
<feature type="sequence conflict" description="In Ref. 2; BAE30671." evidence="6" ref="2">
    <original>F</original>
    <variation>L</variation>
    <location>
        <position position="542"/>
    </location>
</feature>
<name>SAE2_MOUSE</name>
<evidence type="ECO:0000250" key="1"/>
<evidence type="ECO:0000250" key="2">
    <source>
        <dbReference type="UniProtKB" id="Q9UBT2"/>
    </source>
</evidence>
<evidence type="ECO:0000255" key="3">
    <source>
        <dbReference type="PROSITE-ProRule" id="PRU10132"/>
    </source>
</evidence>
<evidence type="ECO:0000256" key="4">
    <source>
        <dbReference type="SAM" id="MobiDB-lite"/>
    </source>
</evidence>
<evidence type="ECO:0000269" key="5">
    <source>
    </source>
</evidence>
<evidence type="ECO:0000305" key="6"/>
<evidence type="ECO:0007744" key="7">
    <source>
    </source>
</evidence>
<evidence type="ECO:0007744" key="8">
    <source>
    </source>
</evidence>
<accession>Q9Z1F9</accession>
<accession>Q3TQN3</accession>
<accession>Q3U819</accession>
<accession>Q3U9J5</accession>
<accession>Q8BVX9</accession>
<reference key="1">
    <citation type="submission" date="1995-09" db="EMBL/GenBank/DDBJ databases">
        <authorList>
            <person name="Mizunuma N."/>
            <person name="Terashima M."/>
            <person name="Yamauchi T."/>
            <person name="Kufe D.W."/>
            <person name="Slapak C.A."/>
        </authorList>
    </citation>
    <scope>NUCLEOTIDE SEQUENCE [MRNA]</scope>
    <source>
        <strain>DBA/2J</strain>
    </source>
</reference>
<reference key="2">
    <citation type="journal article" date="2005" name="Science">
        <title>The transcriptional landscape of the mammalian genome.</title>
        <authorList>
            <person name="Carninci P."/>
            <person name="Kasukawa T."/>
            <person name="Katayama S."/>
            <person name="Gough J."/>
            <person name="Frith M.C."/>
            <person name="Maeda N."/>
            <person name="Oyama R."/>
            <person name="Ravasi T."/>
            <person name="Lenhard B."/>
            <person name="Wells C."/>
            <person name="Kodzius R."/>
            <person name="Shimokawa K."/>
            <person name="Bajic V.B."/>
            <person name="Brenner S.E."/>
            <person name="Batalov S."/>
            <person name="Forrest A.R."/>
            <person name="Zavolan M."/>
            <person name="Davis M.J."/>
            <person name="Wilming L.G."/>
            <person name="Aidinis V."/>
            <person name="Allen J.E."/>
            <person name="Ambesi-Impiombato A."/>
            <person name="Apweiler R."/>
            <person name="Aturaliya R.N."/>
            <person name="Bailey T.L."/>
            <person name="Bansal M."/>
            <person name="Baxter L."/>
            <person name="Beisel K.W."/>
            <person name="Bersano T."/>
            <person name="Bono H."/>
            <person name="Chalk A.M."/>
            <person name="Chiu K.P."/>
            <person name="Choudhary V."/>
            <person name="Christoffels A."/>
            <person name="Clutterbuck D.R."/>
            <person name="Crowe M.L."/>
            <person name="Dalla E."/>
            <person name="Dalrymple B.P."/>
            <person name="de Bono B."/>
            <person name="Della Gatta G."/>
            <person name="di Bernardo D."/>
            <person name="Down T."/>
            <person name="Engstrom P."/>
            <person name="Fagiolini M."/>
            <person name="Faulkner G."/>
            <person name="Fletcher C.F."/>
            <person name="Fukushima T."/>
            <person name="Furuno M."/>
            <person name="Futaki S."/>
            <person name="Gariboldi M."/>
            <person name="Georgii-Hemming P."/>
            <person name="Gingeras T.R."/>
            <person name="Gojobori T."/>
            <person name="Green R.E."/>
            <person name="Gustincich S."/>
            <person name="Harbers M."/>
            <person name="Hayashi Y."/>
            <person name="Hensch T.K."/>
            <person name="Hirokawa N."/>
            <person name="Hill D."/>
            <person name="Huminiecki L."/>
            <person name="Iacono M."/>
            <person name="Ikeo K."/>
            <person name="Iwama A."/>
            <person name="Ishikawa T."/>
            <person name="Jakt M."/>
            <person name="Kanapin A."/>
            <person name="Katoh M."/>
            <person name="Kawasawa Y."/>
            <person name="Kelso J."/>
            <person name="Kitamura H."/>
            <person name="Kitano H."/>
            <person name="Kollias G."/>
            <person name="Krishnan S.P."/>
            <person name="Kruger A."/>
            <person name="Kummerfeld S.K."/>
            <person name="Kurochkin I.V."/>
            <person name="Lareau L.F."/>
            <person name="Lazarevic D."/>
            <person name="Lipovich L."/>
            <person name="Liu J."/>
            <person name="Liuni S."/>
            <person name="McWilliam S."/>
            <person name="Madan Babu M."/>
            <person name="Madera M."/>
            <person name="Marchionni L."/>
            <person name="Matsuda H."/>
            <person name="Matsuzawa S."/>
            <person name="Miki H."/>
            <person name="Mignone F."/>
            <person name="Miyake S."/>
            <person name="Morris K."/>
            <person name="Mottagui-Tabar S."/>
            <person name="Mulder N."/>
            <person name="Nakano N."/>
            <person name="Nakauchi H."/>
            <person name="Ng P."/>
            <person name="Nilsson R."/>
            <person name="Nishiguchi S."/>
            <person name="Nishikawa S."/>
            <person name="Nori F."/>
            <person name="Ohara O."/>
            <person name="Okazaki Y."/>
            <person name="Orlando V."/>
            <person name="Pang K.C."/>
            <person name="Pavan W.J."/>
            <person name="Pavesi G."/>
            <person name="Pesole G."/>
            <person name="Petrovsky N."/>
            <person name="Piazza S."/>
            <person name="Reed J."/>
            <person name="Reid J.F."/>
            <person name="Ring B.Z."/>
            <person name="Ringwald M."/>
            <person name="Rost B."/>
            <person name="Ruan Y."/>
            <person name="Salzberg S.L."/>
            <person name="Sandelin A."/>
            <person name="Schneider C."/>
            <person name="Schoenbach C."/>
            <person name="Sekiguchi K."/>
            <person name="Semple C.A."/>
            <person name="Seno S."/>
            <person name="Sessa L."/>
            <person name="Sheng Y."/>
            <person name="Shibata Y."/>
            <person name="Shimada H."/>
            <person name="Shimada K."/>
            <person name="Silva D."/>
            <person name="Sinclair B."/>
            <person name="Sperling S."/>
            <person name="Stupka E."/>
            <person name="Sugiura K."/>
            <person name="Sultana R."/>
            <person name="Takenaka Y."/>
            <person name="Taki K."/>
            <person name="Tammoja K."/>
            <person name="Tan S.L."/>
            <person name="Tang S."/>
            <person name="Taylor M.S."/>
            <person name="Tegner J."/>
            <person name="Teichmann S.A."/>
            <person name="Ueda H.R."/>
            <person name="van Nimwegen E."/>
            <person name="Verardo R."/>
            <person name="Wei C.L."/>
            <person name="Yagi K."/>
            <person name="Yamanishi H."/>
            <person name="Zabarovsky E."/>
            <person name="Zhu S."/>
            <person name="Zimmer A."/>
            <person name="Hide W."/>
            <person name="Bult C."/>
            <person name="Grimmond S.M."/>
            <person name="Teasdale R.D."/>
            <person name="Liu E.T."/>
            <person name="Brusic V."/>
            <person name="Quackenbush J."/>
            <person name="Wahlestedt C."/>
            <person name="Mattick J.S."/>
            <person name="Hume D.A."/>
            <person name="Kai C."/>
            <person name="Sasaki D."/>
            <person name="Tomaru Y."/>
            <person name="Fukuda S."/>
            <person name="Kanamori-Katayama M."/>
            <person name="Suzuki M."/>
            <person name="Aoki J."/>
            <person name="Arakawa T."/>
            <person name="Iida J."/>
            <person name="Imamura K."/>
            <person name="Itoh M."/>
            <person name="Kato T."/>
            <person name="Kawaji H."/>
            <person name="Kawagashira N."/>
            <person name="Kawashima T."/>
            <person name="Kojima M."/>
            <person name="Kondo S."/>
            <person name="Konno H."/>
            <person name="Nakano K."/>
            <person name="Ninomiya N."/>
            <person name="Nishio T."/>
            <person name="Okada M."/>
            <person name="Plessy C."/>
            <person name="Shibata K."/>
            <person name="Shiraki T."/>
            <person name="Suzuki S."/>
            <person name="Tagami M."/>
            <person name="Waki K."/>
            <person name="Watahiki A."/>
            <person name="Okamura-Oho Y."/>
            <person name="Suzuki H."/>
            <person name="Kawai J."/>
            <person name="Hayashizaki Y."/>
        </authorList>
    </citation>
    <scope>NUCLEOTIDE SEQUENCE [LARGE SCALE MRNA]</scope>
    <source>
        <strain>C57BL/6J</strain>
        <tissue>Amnion</tissue>
        <tissue>Bone marrow</tissue>
        <tissue>Corpora quadrigemina</tissue>
        <tissue>Head</tissue>
        <tissue>Kidney</tissue>
        <tissue>Lung</tissue>
    </source>
</reference>
<reference key="3">
    <citation type="journal article" date="2004" name="Genome Res.">
        <title>The status, quality, and expansion of the NIH full-length cDNA project: the Mammalian Gene Collection (MGC).</title>
        <authorList>
            <consortium name="The MGC Project Team"/>
        </authorList>
    </citation>
    <scope>NUCLEOTIDE SEQUENCE [LARGE SCALE MRNA]</scope>
    <source>
        <strain>C57BL/6J</strain>
        <tissue>Brain</tissue>
    </source>
</reference>
<reference key="4">
    <citation type="journal article" date="2001" name="FASEB J.">
        <title>Expression and regulation of the mammalian SUMO-1 E1 enzyme.</title>
        <authorList>
            <person name="Azuma Y."/>
            <person name="Tan S.-H."/>
            <person name="Cavenagh M.M."/>
            <person name="Ainsztein A.M."/>
            <person name="Saitoh H."/>
            <person name="Dasso M."/>
        </authorList>
    </citation>
    <scope>IDENTIFICATION</scope>
    <scope>TISSUE SPECIFICITY</scope>
</reference>
<reference key="5">
    <citation type="journal article" date="2010" name="Cell">
        <title>A tissue-specific atlas of mouse protein phosphorylation and expression.</title>
        <authorList>
            <person name="Huttlin E.L."/>
            <person name="Jedrychowski M.P."/>
            <person name="Elias J.E."/>
            <person name="Goswami T."/>
            <person name="Rad R."/>
            <person name="Beausoleil S.A."/>
            <person name="Villen J."/>
            <person name="Haas W."/>
            <person name="Sowa M.E."/>
            <person name="Gygi S.P."/>
        </authorList>
    </citation>
    <scope>PHOSPHORYLATION [LARGE SCALE ANALYSIS] AT SER-207; SER-548 AND SER-590</scope>
    <scope>IDENTIFICATION BY MASS SPECTROMETRY [LARGE SCALE ANALYSIS]</scope>
    <source>
        <tissue>Brain</tissue>
        <tissue>Brown adipose tissue</tissue>
        <tissue>Heart</tissue>
        <tissue>Kidney</tissue>
        <tissue>Liver</tissue>
        <tissue>Lung</tissue>
        <tissue>Pancreas</tissue>
        <tissue>Spleen</tissue>
        <tissue>Testis</tissue>
    </source>
</reference>
<reference key="6">
    <citation type="journal article" date="2013" name="Mol. Cell">
        <title>SIRT5-mediated lysine desuccinylation impacts diverse metabolic pathways.</title>
        <authorList>
            <person name="Park J."/>
            <person name="Chen Y."/>
            <person name="Tishkoff D.X."/>
            <person name="Peng C."/>
            <person name="Tan M."/>
            <person name="Dai L."/>
            <person name="Xie Z."/>
            <person name="Zhang Y."/>
            <person name="Zwaans B.M."/>
            <person name="Skinner M.E."/>
            <person name="Lombard D.B."/>
            <person name="Zhao Y."/>
        </authorList>
    </citation>
    <scope>ACETYLATION [LARGE SCALE ANALYSIS] AT LYS-271 AND LYS-611</scope>
    <scope>IDENTIFICATION BY MASS SPECTROMETRY [LARGE SCALE ANALYSIS]</scope>
    <source>
        <tissue>Embryonic fibroblast</tissue>
    </source>
</reference>
<proteinExistence type="evidence at protein level"/>
<comment type="function">
    <text evidence="2">The heterodimer acts as an E1 ligase for SUMO1, SUMO2, SUMO3, and probably SUMO4. It mediates ATP-dependent activation of SUMO proteins followed by formation of a thioester bond between a SUMO protein and a conserved active site cysteine residue on UBA2/SAE2 (By similarity).</text>
</comment>
<comment type="pathway">
    <text>Protein modification; protein sumoylation.</text>
</comment>
<comment type="subunit">
    <text evidence="1">Heterodimer of SAE1 and UBA2/SAE2. The heterodimer corresponds to the two domains that are encoded on a single polypeptide chain in ubiquitin-activating enzyme E1. Interacts with UBE2I (By similarity).</text>
</comment>
<comment type="subcellular location">
    <subcellularLocation>
        <location evidence="1">Cytoplasm</location>
    </subcellularLocation>
    <subcellularLocation>
        <location evidence="1">Nucleus</location>
    </subcellularLocation>
    <text evidence="1">Shuttles between the cytoplasm and the nucleus, sumoylation is required either for nuclear translocation or nuclear retention.</text>
</comment>
<comment type="tissue specificity">
    <text evidence="5">Broadly expressed, with highest levels in testis.</text>
</comment>
<comment type="PTM">
    <text evidence="1">Sumoylated with SUMO1 and SUMO2/3 and by UBC9. Sumoylation at Lys-236 inhibits enzymatic activity. Sumoylation at the C-terminal lysine cluster plays an essential role in nuclear trafficking (By similarity).</text>
</comment>
<comment type="similarity">
    <text evidence="6">Belongs to the ubiquitin-activating E1 family.</text>
</comment>
<dbReference type="EC" id="2.3.2.-"/>
<dbReference type="EMBL" id="U35833">
    <property type="protein sequence ID" value="AAD10338.1"/>
    <property type="molecule type" value="mRNA"/>
</dbReference>
<dbReference type="EMBL" id="AK075938">
    <property type="protein sequence ID" value="BAC36068.1"/>
    <property type="molecule type" value="mRNA"/>
</dbReference>
<dbReference type="EMBL" id="AK146925">
    <property type="protein sequence ID" value="BAE27536.1"/>
    <property type="molecule type" value="mRNA"/>
</dbReference>
<dbReference type="EMBL" id="AK151765">
    <property type="protein sequence ID" value="BAE30671.1"/>
    <property type="molecule type" value="mRNA"/>
</dbReference>
<dbReference type="EMBL" id="AK152415">
    <property type="protein sequence ID" value="BAE31200.1"/>
    <property type="molecule type" value="mRNA"/>
</dbReference>
<dbReference type="EMBL" id="AK163451">
    <property type="protein sequence ID" value="BAE37349.1"/>
    <property type="molecule type" value="mRNA"/>
</dbReference>
<dbReference type="EMBL" id="AK164826">
    <property type="protein sequence ID" value="BAE37935.1"/>
    <property type="molecule type" value="mRNA"/>
</dbReference>
<dbReference type="EMBL" id="AK166133">
    <property type="protein sequence ID" value="BAE38590.1"/>
    <property type="molecule type" value="mRNA"/>
</dbReference>
<dbReference type="EMBL" id="AK168673">
    <property type="protein sequence ID" value="BAE40523.1"/>
    <property type="molecule type" value="mRNA"/>
</dbReference>
<dbReference type="EMBL" id="AK169168">
    <property type="protein sequence ID" value="BAE40947.1"/>
    <property type="molecule type" value="mRNA"/>
</dbReference>
<dbReference type="EMBL" id="BC054768">
    <property type="protein sequence ID" value="AAH54768.1"/>
    <property type="molecule type" value="mRNA"/>
</dbReference>
<dbReference type="CCDS" id="CCDS21136.1"/>
<dbReference type="RefSeq" id="NP_057891.1">
    <property type="nucleotide sequence ID" value="NM_016682.3"/>
</dbReference>
<dbReference type="SMR" id="Q9Z1F9"/>
<dbReference type="BioGRID" id="206169">
    <property type="interactions" value="24"/>
</dbReference>
<dbReference type="ComplexPortal" id="CPX-3041">
    <property type="entry name" value="SUMO activating enzyme complex, SAE1-UBA2"/>
</dbReference>
<dbReference type="FunCoup" id="Q9Z1F9">
    <property type="interactions" value="5511"/>
</dbReference>
<dbReference type="IntAct" id="Q9Z1F9">
    <property type="interactions" value="2"/>
</dbReference>
<dbReference type="STRING" id="10090.ENSMUSP00000099807"/>
<dbReference type="GlyGen" id="Q9Z1F9">
    <property type="glycosylation" value="1 site, 1 O-linked glycan (1 site)"/>
</dbReference>
<dbReference type="iPTMnet" id="Q9Z1F9"/>
<dbReference type="PhosphoSitePlus" id="Q9Z1F9"/>
<dbReference type="SwissPalm" id="Q9Z1F9"/>
<dbReference type="jPOST" id="Q9Z1F9"/>
<dbReference type="PaxDb" id="10090-ENSMUSP00000099807"/>
<dbReference type="PeptideAtlas" id="Q9Z1F9"/>
<dbReference type="ProteomicsDB" id="256690"/>
<dbReference type="Pumba" id="Q9Z1F9"/>
<dbReference type="Antibodypedia" id="29159">
    <property type="antibodies" value="367 antibodies from 41 providers"/>
</dbReference>
<dbReference type="DNASU" id="50995"/>
<dbReference type="Ensembl" id="ENSMUST00000102746.11">
    <property type="protein sequence ID" value="ENSMUSP00000099807.5"/>
    <property type="gene ID" value="ENSMUSG00000052997.16"/>
</dbReference>
<dbReference type="GeneID" id="50995"/>
<dbReference type="KEGG" id="mmu:50995"/>
<dbReference type="UCSC" id="uc009giu.1">
    <property type="organism name" value="mouse"/>
</dbReference>
<dbReference type="AGR" id="MGI:1858313"/>
<dbReference type="CTD" id="10054"/>
<dbReference type="MGI" id="MGI:1858313">
    <property type="gene designation" value="Uba2"/>
</dbReference>
<dbReference type="VEuPathDB" id="HostDB:ENSMUSG00000052997"/>
<dbReference type="eggNOG" id="KOG2013">
    <property type="taxonomic scope" value="Eukaryota"/>
</dbReference>
<dbReference type="GeneTree" id="ENSGT00550000074924"/>
<dbReference type="HOGENOM" id="CLU_013325_7_4_1"/>
<dbReference type="InParanoid" id="Q9Z1F9"/>
<dbReference type="OMA" id="TPSEHIH"/>
<dbReference type="OrthoDB" id="10255449at2759"/>
<dbReference type="PhylomeDB" id="Q9Z1F9"/>
<dbReference type="TreeFam" id="TF300765"/>
<dbReference type="Reactome" id="R-MMU-3065676">
    <property type="pathway name" value="SUMO is conjugated to E1 (UBA2:SAE1)"/>
</dbReference>
<dbReference type="Reactome" id="R-MMU-3065678">
    <property type="pathway name" value="SUMO is transferred from E1 to E2 (UBE2I, UBC9)"/>
</dbReference>
<dbReference type="UniPathway" id="UPA00886"/>
<dbReference type="BioGRID-ORCS" id="50995">
    <property type="hits" value="30 hits in 80 CRISPR screens"/>
</dbReference>
<dbReference type="ChiTaRS" id="Uba2">
    <property type="organism name" value="mouse"/>
</dbReference>
<dbReference type="PRO" id="PR:Q9Z1F9"/>
<dbReference type="Proteomes" id="UP000000589">
    <property type="component" value="Chromosome 7"/>
</dbReference>
<dbReference type="RNAct" id="Q9Z1F9">
    <property type="molecule type" value="protein"/>
</dbReference>
<dbReference type="Bgee" id="ENSMUSG00000052997">
    <property type="expression patterns" value="Expressed in otic placode and 266 other cell types or tissues"/>
</dbReference>
<dbReference type="ExpressionAtlas" id="Q9Z1F9">
    <property type="expression patterns" value="baseline and differential"/>
</dbReference>
<dbReference type="GO" id="GO:0005737">
    <property type="term" value="C:cytoplasm"/>
    <property type="evidence" value="ECO:0007669"/>
    <property type="project" value="UniProtKB-SubCell"/>
</dbReference>
<dbReference type="GO" id="GO:0005730">
    <property type="term" value="C:nucleolus"/>
    <property type="evidence" value="ECO:0007669"/>
    <property type="project" value="Ensembl"/>
</dbReference>
<dbReference type="GO" id="GO:0005654">
    <property type="term" value="C:nucleoplasm"/>
    <property type="evidence" value="ECO:0007669"/>
    <property type="project" value="Ensembl"/>
</dbReference>
<dbReference type="GO" id="GO:0031510">
    <property type="term" value="C:SUMO activating enzyme complex"/>
    <property type="evidence" value="ECO:0000314"/>
    <property type="project" value="MGI"/>
</dbReference>
<dbReference type="GO" id="GO:0005524">
    <property type="term" value="F:ATP binding"/>
    <property type="evidence" value="ECO:0007669"/>
    <property type="project" value="UniProtKB-KW"/>
</dbReference>
<dbReference type="GO" id="GO:0000287">
    <property type="term" value="F:magnesium ion binding"/>
    <property type="evidence" value="ECO:0007669"/>
    <property type="project" value="Ensembl"/>
</dbReference>
<dbReference type="GO" id="GO:0046982">
    <property type="term" value="F:protein heterodimerization activity"/>
    <property type="evidence" value="ECO:0007669"/>
    <property type="project" value="Ensembl"/>
</dbReference>
<dbReference type="GO" id="GO:0044388">
    <property type="term" value="F:small protein activating enzyme binding"/>
    <property type="evidence" value="ECO:0007669"/>
    <property type="project" value="Ensembl"/>
</dbReference>
<dbReference type="GO" id="GO:0019948">
    <property type="term" value="F:SUMO activating enzyme activity"/>
    <property type="evidence" value="ECO:0000314"/>
    <property type="project" value="MGI"/>
</dbReference>
<dbReference type="GO" id="GO:0032183">
    <property type="term" value="F:SUMO binding"/>
    <property type="evidence" value="ECO:0007669"/>
    <property type="project" value="Ensembl"/>
</dbReference>
<dbReference type="GO" id="GO:0016740">
    <property type="term" value="F:transferase activity"/>
    <property type="evidence" value="ECO:0007669"/>
    <property type="project" value="UniProtKB-KW"/>
</dbReference>
<dbReference type="GO" id="GO:0044390">
    <property type="term" value="F:ubiquitin-like protein conjugating enzyme binding"/>
    <property type="evidence" value="ECO:0007669"/>
    <property type="project" value="Ensembl"/>
</dbReference>
<dbReference type="GO" id="GO:0033235">
    <property type="term" value="P:positive regulation of protein sumoylation"/>
    <property type="evidence" value="ECO:0007669"/>
    <property type="project" value="Ensembl"/>
</dbReference>
<dbReference type="GO" id="GO:0016925">
    <property type="term" value="P:protein sumoylation"/>
    <property type="evidence" value="ECO:0000250"/>
    <property type="project" value="UniProtKB"/>
</dbReference>
<dbReference type="CDD" id="cd01489">
    <property type="entry name" value="Uba2_SUMO"/>
    <property type="match status" value="1"/>
</dbReference>
<dbReference type="FunFam" id="1.10.10.520:FF:000002">
    <property type="entry name" value="SUMO-activating enzyme subunit 2"/>
    <property type="match status" value="1"/>
</dbReference>
<dbReference type="FunFam" id="3.10.290.20:FF:000002">
    <property type="entry name" value="SUMO-activating enzyme subunit 2"/>
    <property type="match status" value="1"/>
</dbReference>
<dbReference type="FunFam" id="3.40.50.720:FF:000618">
    <property type="entry name" value="SUMO-activating enzyme subunit 2"/>
    <property type="match status" value="1"/>
</dbReference>
<dbReference type="FunFam" id="3.50.50.80:FF:000002">
    <property type="entry name" value="SUMO-activating enzyme subunit 2"/>
    <property type="match status" value="1"/>
</dbReference>
<dbReference type="Gene3D" id="1.10.10.520">
    <property type="entry name" value="Ubiquitin activating enzymes (Uba3). Chain: B, domain 2"/>
    <property type="match status" value="1"/>
</dbReference>
<dbReference type="Gene3D" id="3.50.50.80">
    <property type="entry name" value="Ubiquitin-activating enzyme E1, inactive adenylation domain, subdomain 1"/>
    <property type="match status" value="1"/>
</dbReference>
<dbReference type="Gene3D" id="3.10.290.20">
    <property type="entry name" value="Ubiquitin-like 2 activating enzyme e1b. Chain: B, domain 3"/>
    <property type="match status" value="1"/>
</dbReference>
<dbReference type="InterPro" id="IPR045886">
    <property type="entry name" value="ThiF/MoeB/HesA"/>
</dbReference>
<dbReference type="InterPro" id="IPR000594">
    <property type="entry name" value="ThiF_NAD_FAD-bd"/>
</dbReference>
<dbReference type="InterPro" id="IPR028077">
    <property type="entry name" value="UAE_UbL_dom"/>
</dbReference>
<dbReference type="InterPro" id="IPR042449">
    <property type="entry name" value="Ub-E1_IAD_1"/>
</dbReference>
<dbReference type="InterPro" id="IPR023318">
    <property type="entry name" value="Ub_act_enz_dom_a_sf"/>
</dbReference>
<dbReference type="InterPro" id="IPR030661">
    <property type="entry name" value="Uba2"/>
</dbReference>
<dbReference type="InterPro" id="IPR032426">
    <property type="entry name" value="UBA2_C"/>
</dbReference>
<dbReference type="InterPro" id="IPR035985">
    <property type="entry name" value="Ubiquitin-activating_enz"/>
</dbReference>
<dbReference type="InterPro" id="IPR018074">
    <property type="entry name" value="UBQ-activ_enz_E1_CS"/>
</dbReference>
<dbReference type="InterPro" id="IPR033127">
    <property type="entry name" value="UBQ-activ_enz_E1_Cys_AS"/>
</dbReference>
<dbReference type="PANTHER" id="PTHR10953:SF5">
    <property type="entry name" value="SUMO-ACTIVATING ENZYME SUBUNIT 2"/>
    <property type="match status" value="1"/>
</dbReference>
<dbReference type="PANTHER" id="PTHR10953">
    <property type="entry name" value="UBIQUITIN-ACTIVATING ENZYME E1"/>
    <property type="match status" value="1"/>
</dbReference>
<dbReference type="Pfam" id="PF00899">
    <property type="entry name" value="ThiF"/>
    <property type="match status" value="1"/>
</dbReference>
<dbReference type="Pfam" id="PF14732">
    <property type="entry name" value="UAE_UbL"/>
    <property type="match status" value="1"/>
</dbReference>
<dbReference type="Pfam" id="PF16195">
    <property type="entry name" value="UBA2_C"/>
    <property type="match status" value="1"/>
</dbReference>
<dbReference type="PIRSF" id="PIRSF039133">
    <property type="entry name" value="SUMO_E1B"/>
    <property type="match status" value="1"/>
</dbReference>
<dbReference type="SUPFAM" id="SSF69572">
    <property type="entry name" value="Activating enzymes of the ubiquitin-like proteins"/>
    <property type="match status" value="1"/>
</dbReference>
<dbReference type="PROSITE" id="PS00536">
    <property type="entry name" value="UBIQUITIN_ACTIVAT_1"/>
    <property type="match status" value="1"/>
</dbReference>
<dbReference type="PROSITE" id="PS00865">
    <property type="entry name" value="UBIQUITIN_ACTIVAT_2"/>
    <property type="match status" value="1"/>
</dbReference>
<organism>
    <name type="scientific">Mus musculus</name>
    <name type="common">Mouse</name>
    <dbReference type="NCBI Taxonomy" id="10090"/>
    <lineage>
        <taxon>Eukaryota</taxon>
        <taxon>Metazoa</taxon>
        <taxon>Chordata</taxon>
        <taxon>Craniata</taxon>
        <taxon>Vertebrata</taxon>
        <taxon>Euteleostomi</taxon>
        <taxon>Mammalia</taxon>
        <taxon>Eutheria</taxon>
        <taxon>Euarchontoglires</taxon>
        <taxon>Glires</taxon>
        <taxon>Rodentia</taxon>
        <taxon>Myomorpha</taxon>
        <taxon>Muroidea</taxon>
        <taxon>Muridae</taxon>
        <taxon>Murinae</taxon>
        <taxon>Mus</taxon>
        <taxon>Mus</taxon>
    </lineage>
</organism>